<protein>
    <recommendedName>
        <fullName evidence="1">tRNA uridine 5-carboxymethylaminomethyl modification enzyme MnmG</fullName>
    </recommendedName>
    <alternativeName>
        <fullName evidence="1">Glucose-inhibited division protein A</fullName>
    </alternativeName>
</protein>
<reference key="1">
    <citation type="journal article" date="2002" name="DNA Res.">
        <title>Complete genomic sequence of nitrogen-fixing symbiotic bacterium Bradyrhizobium japonicum USDA110.</title>
        <authorList>
            <person name="Kaneko T."/>
            <person name="Nakamura Y."/>
            <person name="Sato S."/>
            <person name="Minamisawa K."/>
            <person name="Uchiumi T."/>
            <person name="Sasamoto S."/>
            <person name="Watanabe A."/>
            <person name="Idesawa K."/>
            <person name="Iriguchi M."/>
            <person name="Kawashima K."/>
            <person name="Kohara M."/>
            <person name="Matsumoto M."/>
            <person name="Shimpo S."/>
            <person name="Tsuruoka H."/>
            <person name="Wada T."/>
            <person name="Yamada M."/>
            <person name="Tabata S."/>
        </authorList>
    </citation>
    <scope>NUCLEOTIDE SEQUENCE [LARGE SCALE GENOMIC DNA]</scope>
    <source>
        <strain>JCM 10833 / BCRC 13528 / IAM 13628 / NBRC 14792 / USDA 110</strain>
    </source>
</reference>
<accession>Q89WP5</accession>
<feature type="chain" id="PRO_0000117068" description="tRNA uridine 5-carboxymethylaminomethyl modification enzyme MnmG">
    <location>
        <begin position="1"/>
        <end position="626"/>
    </location>
</feature>
<feature type="binding site" evidence="1">
    <location>
        <begin position="14"/>
        <end position="19"/>
    </location>
    <ligand>
        <name>FAD</name>
        <dbReference type="ChEBI" id="CHEBI:57692"/>
    </ligand>
</feature>
<feature type="binding site" evidence="1">
    <location>
        <begin position="273"/>
        <end position="287"/>
    </location>
    <ligand>
        <name>NAD(+)</name>
        <dbReference type="ChEBI" id="CHEBI:57540"/>
    </ligand>
</feature>
<gene>
    <name evidence="1" type="primary">mnmG</name>
    <name evidence="1" type="synonym">gidA</name>
    <name type="ordered locus">bll0633</name>
</gene>
<organism>
    <name type="scientific">Bradyrhizobium diazoefficiens (strain JCM 10833 / BCRC 13528 / IAM 13628 / NBRC 14792 / USDA 110)</name>
    <dbReference type="NCBI Taxonomy" id="224911"/>
    <lineage>
        <taxon>Bacteria</taxon>
        <taxon>Pseudomonadati</taxon>
        <taxon>Pseudomonadota</taxon>
        <taxon>Alphaproteobacteria</taxon>
        <taxon>Hyphomicrobiales</taxon>
        <taxon>Nitrobacteraceae</taxon>
        <taxon>Bradyrhizobium</taxon>
    </lineage>
</organism>
<evidence type="ECO:0000255" key="1">
    <source>
        <dbReference type="HAMAP-Rule" id="MF_00129"/>
    </source>
</evidence>
<keyword id="KW-0963">Cytoplasm</keyword>
<keyword id="KW-0274">FAD</keyword>
<keyword id="KW-0285">Flavoprotein</keyword>
<keyword id="KW-0520">NAD</keyword>
<keyword id="KW-1185">Reference proteome</keyword>
<keyword id="KW-0819">tRNA processing</keyword>
<dbReference type="EMBL" id="BA000040">
    <property type="protein sequence ID" value="BAC45898.1"/>
    <property type="molecule type" value="Genomic_DNA"/>
</dbReference>
<dbReference type="RefSeq" id="NP_767273.1">
    <property type="nucleotide sequence ID" value="NC_004463.1"/>
</dbReference>
<dbReference type="RefSeq" id="WP_011083460.1">
    <property type="nucleotide sequence ID" value="NC_004463.1"/>
</dbReference>
<dbReference type="SMR" id="Q89WP5"/>
<dbReference type="FunCoup" id="Q89WP5">
    <property type="interactions" value="729"/>
</dbReference>
<dbReference type="STRING" id="224911.AAV28_42440"/>
<dbReference type="EnsemblBacteria" id="BAC45898">
    <property type="protein sequence ID" value="BAC45898"/>
    <property type="gene ID" value="BAC45898"/>
</dbReference>
<dbReference type="GeneID" id="46495778"/>
<dbReference type="KEGG" id="bja:bll0633"/>
<dbReference type="PATRIC" id="fig|224911.44.peg.9173"/>
<dbReference type="eggNOG" id="COG0445">
    <property type="taxonomic scope" value="Bacteria"/>
</dbReference>
<dbReference type="HOGENOM" id="CLU_007831_2_2_5"/>
<dbReference type="InParanoid" id="Q89WP5"/>
<dbReference type="OrthoDB" id="9815560at2"/>
<dbReference type="PhylomeDB" id="Q89WP5"/>
<dbReference type="Proteomes" id="UP000002526">
    <property type="component" value="Chromosome"/>
</dbReference>
<dbReference type="GO" id="GO:0005829">
    <property type="term" value="C:cytosol"/>
    <property type="evidence" value="ECO:0000318"/>
    <property type="project" value="GO_Central"/>
</dbReference>
<dbReference type="GO" id="GO:0050660">
    <property type="term" value="F:flavin adenine dinucleotide binding"/>
    <property type="evidence" value="ECO:0000318"/>
    <property type="project" value="GO_Central"/>
</dbReference>
<dbReference type="GO" id="GO:0030488">
    <property type="term" value="P:tRNA methylation"/>
    <property type="evidence" value="ECO:0000318"/>
    <property type="project" value="GO_Central"/>
</dbReference>
<dbReference type="GO" id="GO:0002098">
    <property type="term" value="P:tRNA wobble uridine modification"/>
    <property type="evidence" value="ECO:0000318"/>
    <property type="project" value="GO_Central"/>
</dbReference>
<dbReference type="FunFam" id="3.50.50.60:FF:000145">
    <property type="entry name" value="tRNA uridine 5-carboxymethylaminomethyl modification enzyme"/>
    <property type="match status" value="1"/>
</dbReference>
<dbReference type="FunFam" id="1.10.150.570:FF:000001">
    <property type="entry name" value="tRNA uridine 5-carboxymethylaminomethyl modification enzyme MnmG"/>
    <property type="match status" value="1"/>
</dbReference>
<dbReference type="FunFam" id="3.50.50.60:FF:000002">
    <property type="entry name" value="tRNA uridine 5-carboxymethylaminomethyl modification enzyme MnmG"/>
    <property type="match status" value="1"/>
</dbReference>
<dbReference type="Gene3D" id="3.50.50.60">
    <property type="entry name" value="FAD/NAD(P)-binding domain"/>
    <property type="match status" value="2"/>
</dbReference>
<dbReference type="Gene3D" id="1.10.150.570">
    <property type="entry name" value="GidA associated domain, C-terminal subdomain"/>
    <property type="match status" value="1"/>
</dbReference>
<dbReference type="HAMAP" id="MF_00129">
    <property type="entry name" value="MnmG_GidA"/>
    <property type="match status" value="1"/>
</dbReference>
<dbReference type="InterPro" id="IPR036188">
    <property type="entry name" value="FAD/NAD-bd_sf"/>
</dbReference>
<dbReference type="InterPro" id="IPR049312">
    <property type="entry name" value="GIDA_C_N"/>
</dbReference>
<dbReference type="InterPro" id="IPR004416">
    <property type="entry name" value="MnmG"/>
</dbReference>
<dbReference type="InterPro" id="IPR002218">
    <property type="entry name" value="MnmG-rel"/>
</dbReference>
<dbReference type="InterPro" id="IPR020595">
    <property type="entry name" value="MnmG-rel_CS"/>
</dbReference>
<dbReference type="InterPro" id="IPR026904">
    <property type="entry name" value="MnmG_C"/>
</dbReference>
<dbReference type="InterPro" id="IPR047001">
    <property type="entry name" value="MnmG_C_subdom"/>
</dbReference>
<dbReference type="InterPro" id="IPR044920">
    <property type="entry name" value="MnmG_C_subdom_sf"/>
</dbReference>
<dbReference type="InterPro" id="IPR040131">
    <property type="entry name" value="MnmG_N"/>
</dbReference>
<dbReference type="NCBIfam" id="TIGR00136">
    <property type="entry name" value="mnmG_gidA"/>
    <property type="match status" value="1"/>
</dbReference>
<dbReference type="PANTHER" id="PTHR11806">
    <property type="entry name" value="GLUCOSE INHIBITED DIVISION PROTEIN A"/>
    <property type="match status" value="1"/>
</dbReference>
<dbReference type="PANTHER" id="PTHR11806:SF0">
    <property type="entry name" value="PROTEIN MTO1 HOMOLOG, MITOCHONDRIAL"/>
    <property type="match status" value="1"/>
</dbReference>
<dbReference type="Pfam" id="PF01134">
    <property type="entry name" value="GIDA"/>
    <property type="match status" value="1"/>
</dbReference>
<dbReference type="Pfam" id="PF21680">
    <property type="entry name" value="GIDA_C_1st"/>
    <property type="match status" value="1"/>
</dbReference>
<dbReference type="Pfam" id="PF13932">
    <property type="entry name" value="SAM_GIDA_C"/>
    <property type="match status" value="1"/>
</dbReference>
<dbReference type="PRINTS" id="PR00411">
    <property type="entry name" value="PNDRDTASEI"/>
</dbReference>
<dbReference type="SMART" id="SM01228">
    <property type="entry name" value="GIDA_assoc_3"/>
    <property type="match status" value="1"/>
</dbReference>
<dbReference type="SUPFAM" id="SSF51905">
    <property type="entry name" value="FAD/NAD(P)-binding domain"/>
    <property type="match status" value="1"/>
</dbReference>
<dbReference type="PROSITE" id="PS01280">
    <property type="entry name" value="GIDA_1"/>
    <property type="match status" value="1"/>
</dbReference>
<dbReference type="PROSITE" id="PS01281">
    <property type="entry name" value="GIDA_2"/>
    <property type="match status" value="1"/>
</dbReference>
<comment type="function">
    <text evidence="1">NAD-binding protein involved in the addition of a carboxymethylaminomethyl (cmnm) group at the wobble position (U34) of certain tRNAs, forming tRNA-cmnm(5)s(2)U34.</text>
</comment>
<comment type="cofactor">
    <cofactor evidence="1">
        <name>FAD</name>
        <dbReference type="ChEBI" id="CHEBI:57692"/>
    </cofactor>
</comment>
<comment type="subunit">
    <text evidence="1">Homodimer. Heterotetramer of two MnmE and two MnmG subunits.</text>
</comment>
<comment type="subcellular location">
    <subcellularLocation>
        <location evidence="1">Cytoplasm</location>
    </subcellularLocation>
</comment>
<comment type="similarity">
    <text evidence="1">Belongs to the MnmG family.</text>
</comment>
<name>MNMG_BRADU</name>
<proteinExistence type="inferred from homology"/>
<sequence length="626" mass="67534">MRPERESFDVIVIGGGHAGCEAAAASARMGAATALVTHRFSTVGAMSCNPAIGGLGKGHLVREVDALDGLMGRVGDAGGIQFRVLNRRKGPAVRGPRAQADRKLYAAAMQAAIRETEGLSVIEGEADELIVVEGRVTGLRLADGREFGAGSIVVTTGTFLRGLIHLGEKNWPAGRVGEAPAMGLSSSFERAGFTLGRLKTGTPPRLDGTTIDWSAVEMQPGDEPPEPFSVMTDRITTPQIQCGITRTTAATHEVIRANVHRSPMYSGQIKSSGPRYCPSIEDKIVRFGDRDGHQIFLEPEGLDDSTVYPNGISTSLPEEVQLAILASIPGLERVKMVRPGYAIEYDHIDPRELDPTLQTKRLRGLFLAGQINGTTGYEEAAGQGIVAGLNAALAASGAALTVFDRADGYLGVMIDDLVTRGISEPYRMFTSRAEYRLTLRADNADQRLTEKGIALGCVRSARTLHHRTKMEALNAARTLSKSLTITPNEAIKHGLSLNRDGQRRSAFELMAYPDIGWSQVRAIWLELSAIDPVIATHLEIDAKYDVYLERQSADVEAFRRDEGLVLSEVDYQLVPGLSNEVRAKLEKARPFTVGQAGRIDGMTPAALGILAAYLRREARKTSKAIA</sequence>